<protein>
    <recommendedName>
        <fullName>Sensor protein kinase GraS</fullName>
        <ecNumber>2.7.13.3</ecNumber>
    </recommendedName>
    <alternativeName>
        <fullName>Glycopeptide resistance-associated protein S</fullName>
    </alternativeName>
</protein>
<dbReference type="EC" id="2.7.13.3"/>
<dbReference type="EMBL" id="CP000736">
    <property type="protein sequence ID" value="ABR51555.1"/>
    <property type="molecule type" value="Genomic_DNA"/>
</dbReference>
<dbReference type="SMR" id="A6TZD7"/>
<dbReference type="KEGG" id="sah:SaurJH1_0698"/>
<dbReference type="HOGENOM" id="CLU_000445_13_1_9"/>
<dbReference type="GO" id="GO:0005886">
    <property type="term" value="C:plasma membrane"/>
    <property type="evidence" value="ECO:0007669"/>
    <property type="project" value="UniProtKB-SubCell"/>
</dbReference>
<dbReference type="GO" id="GO:0005524">
    <property type="term" value="F:ATP binding"/>
    <property type="evidence" value="ECO:0007669"/>
    <property type="project" value="UniProtKB-KW"/>
</dbReference>
<dbReference type="GO" id="GO:0004721">
    <property type="term" value="F:phosphoprotein phosphatase activity"/>
    <property type="evidence" value="ECO:0007669"/>
    <property type="project" value="TreeGrafter"/>
</dbReference>
<dbReference type="GO" id="GO:0000155">
    <property type="term" value="F:phosphorelay sensor kinase activity"/>
    <property type="evidence" value="ECO:0007669"/>
    <property type="project" value="InterPro"/>
</dbReference>
<dbReference type="GO" id="GO:0016036">
    <property type="term" value="P:cellular response to phosphate starvation"/>
    <property type="evidence" value="ECO:0007669"/>
    <property type="project" value="TreeGrafter"/>
</dbReference>
<dbReference type="GO" id="GO:0046677">
    <property type="term" value="P:response to antibiotic"/>
    <property type="evidence" value="ECO:0007669"/>
    <property type="project" value="UniProtKB-KW"/>
</dbReference>
<dbReference type="Gene3D" id="3.30.565.10">
    <property type="entry name" value="Histidine kinase-like ATPase, C-terminal domain"/>
    <property type="match status" value="1"/>
</dbReference>
<dbReference type="InterPro" id="IPR050351">
    <property type="entry name" value="2-comp_sensor_kinase"/>
</dbReference>
<dbReference type="InterPro" id="IPR036890">
    <property type="entry name" value="HATPase_C_sf"/>
</dbReference>
<dbReference type="InterPro" id="IPR005467">
    <property type="entry name" value="His_kinase_dom"/>
</dbReference>
<dbReference type="InterPro" id="IPR036097">
    <property type="entry name" value="HisK_dim/P_sf"/>
</dbReference>
<dbReference type="InterPro" id="IPR004358">
    <property type="entry name" value="Sig_transdc_His_kin-like_C"/>
</dbReference>
<dbReference type="PANTHER" id="PTHR45453:SF2">
    <property type="entry name" value="HISTIDINE KINASE"/>
    <property type="match status" value="1"/>
</dbReference>
<dbReference type="PANTHER" id="PTHR45453">
    <property type="entry name" value="PHOSPHATE REGULON SENSOR PROTEIN PHOR"/>
    <property type="match status" value="1"/>
</dbReference>
<dbReference type="Pfam" id="PF02518">
    <property type="entry name" value="HATPase_c"/>
    <property type="match status" value="1"/>
</dbReference>
<dbReference type="PRINTS" id="PR00344">
    <property type="entry name" value="BCTRLSENSOR"/>
</dbReference>
<dbReference type="SMART" id="SM00387">
    <property type="entry name" value="HATPase_c"/>
    <property type="match status" value="1"/>
</dbReference>
<dbReference type="SUPFAM" id="SSF55874">
    <property type="entry name" value="ATPase domain of HSP90 chaperone/DNA topoisomerase II/histidine kinase"/>
    <property type="match status" value="1"/>
</dbReference>
<dbReference type="SUPFAM" id="SSF47384">
    <property type="entry name" value="Homodimeric domain of signal transducing histidine kinase"/>
    <property type="match status" value="1"/>
</dbReference>
<dbReference type="PROSITE" id="PS50109">
    <property type="entry name" value="HIS_KIN"/>
    <property type="match status" value="1"/>
</dbReference>
<accession>A6TZD7</accession>
<name>GRAS_STAA2</name>
<sequence>MNNLKWVAYFLKSRMNWIFWILFLNLLMLGISLIDYDFPIDSLFYIVSLNLSLTMIFLILTYFKEVKLYKHFDKDKEIEEIKHKDLAETPFQRHTVDYLYRQISAHKEKVVEQQLQLNMHEQTITEFVHDIKTPVTAMKLLIDQEKNQERKQALLYEWSRINSMLDTQLYITRLESQRKDMYFDYVSLKRMVIDEIQLTRHISQVKGIGFDVDFKVDDYVYTDTKWCRMIIRQILSNALKYSENFNIEIGTELNDQHVSLYIKDYGRGISKKDMPRIFERGFTSTANRNETTSSGMGLYLVNSVKDQLGIHLQVTSTVGKGTTVRLIFPLQNEIVERMSEVTNLSF</sequence>
<feature type="chain" id="PRO_0000347915" description="Sensor protein kinase GraS">
    <location>
        <begin position="1"/>
        <end position="346"/>
    </location>
</feature>
<feature type="transmembrane region" description="Helical" evidence="2">
    <location>
        <begin position="15"/>
        <end position="35"/>
    </location>
</feature>
<feature type="transmembrane region" description="Helical" evidence="2">
    <location>
        <begin position="43"/>
        <end position="63"/>
    </location>
</feature>
<feature type="domain" description="Histidine kinase" evidence="3">
    <location>
        <begin position="126"/>
        <end position="332"/>
    </location>
</feature>
<organism>
    <name type="scientific">Staphylococcus aureus (strain JH1)</name>
    <dbReference type="NCBI Taxonomy" id="359787"/>
    <lineage>
        <taxon>Bacteria</taxon>
        <taxon>Bacillati</taxon>
        <taxon>Bacillota</taxon>
        <taxon>Bacilli</taxon>
        <taxon>Bacillales</taxon>
        <taxon>Staphylococcaceae</taxon>
        <taxon>Staphylococcus</taxon>
    </lineage>
</organism>
<reference key="1">
    <citation type="submission" date="2007-06" db="EMBL/GenBank/DDBJ databases">
        <title>Complete sequence of chromosome of Staphylococcus aureus subsp. aureus JH1.</title>
        <authorList>
            <consortium name="US DOE Joint Genome Institute"/>
            <person name="Copeland A."/>
            <person name="Lucas S."/>
            <person name="Lapidus A."/>
            <person name="Barry K."/>
            <person name="Detter J.C."/>
            <person name="Glavina del Rio T."/>
            <person name="Hammon N."/>
            <person name="Israni S."/>
            <person name="Dalin E."/>
            <person name="Tice H."/>
            <person name="Pitluck S."/>
            <person name="Chain P."/>
            <person name="Malfatti S."/>
            <person name="Shin M."/>
            <person name="Vergez L."/>
            <person name="Schmutz J."/>
            <person name="Larimer F."/>
            <person name="Land M."/>
            <person name="Hauser L."/>
            <person name="Kyrpides N."/>
            <person name="Ivanova N."/>
            <person name="Tomasz A."/>
            <person name="Richardson P."/>
        </authorList>
    </citation>
    <scope>NUCLEOTIDE SEQUENCE [LARGE SCALE GENOMIC DNA]</scope>
    <source>
        <strain>JH1</strain>
    </source>
</reference>
<keyword id="KW-0046">Antibiotic resistance</keyword>
<keyword id="KW-0067">ATP-binding</keyword>
<keyword id="KW-1003">Cell membrane</keyword>
<keyword id="KW-0418">Kinase</keyword>
<keyword id="KW-0472">Membrane</keyword>
<keyword id="KW-0547">Nucleotide-binding</keyword>
<keyword id="KW-0808">Transferase</keyword>
<keyword id="KW-0812">Transmembrane</keyword>
<keyword id="KW-1133">Transmembrane helix</keyword>
<keyword id="KW-0902">Two-component regulatory system</keyword>
<keyword id="KW-0843">Virulence</keyword>
<gene>
    <name type="primary">graS</name>
    <name type="ordered locus">SaurJH1_0698</name>
</gene>
<proteinExistence type="inferred from homology"/>
<comment type="function">
    <text evidence="1">Member of the two-component regulatory system GraR/GraS involved in resistance against cationic antimicrobial peptides (CAMPs). Functions as a sensor protein kinase which phosphorylates GraR through the auxiliary protein GraX. In turn, GraR up-regulates many genes such as adhesins, exoproteins, transporters, toxins, and proteins involved in cell wall synthesis. Down-regulates the expression of many genes involved in RNA and amino acid synthesis or glycolysis.</text>
</comment>
<comment type="catalytic activity">
    <reaction>
        <text>ATP + protein L-histidine = ADP + protein N-phospho-L-histidine.</text>
        <dbReference type="EC" id="2.7.13.3"/>
    </reaction>
</comment>
<comment type="subunit">
    <text evidence="1">Interacts with GraX.</text>
</comment>
<comment type="subcellular location">
    <subcellularLocation>
        <location evidence="4">Cell membrane</location>
        <topology evidence="4">Multi-pass membrane protein</topology>
    </subcellularLocation>
</comment>
<evidence type="ECO:0000250" key="1">
    <source>
        <dbReference type="UniProtKB" id="Q2G0D9"/>
    </source>
</evidence>
<evidence type="ECO:0000255" key="2"/>
<evidence type="ECO:0000255" key="3">
    <source>
        <dbReference type="PROSITE-ProRule" id="PRU00107"/>
    </source>
</evidence>
<evidence type="ECO:0000305" key="4"/>